<proteinExistence type="inferred from homology"/>
<dbReference type="EC" id="1.97.1.12" evidence="1"/>
<dbReference type="EMBL" id="DQ345959">
    <property type="protein sequence ID" value="ABC73627.1"/>
    <property type="molecule type" value="Genomic_DNA"/>
</dbReference>
<dbReference type="RefSeq" id="YP_538934.1">
    <property type="nucleotide sequence ID" value="NC_007944.1"/>
</dbReference>
<dbReference type="SMR" id="Q2L903"/>
<dbReference type="GeneID" id="3989213"/>
<dbReference type="KEGG" id="ghi:3989213"/>
<dbReference type="OrthoDB" id="66930at41938"/>
<dbReference type="Proteomes" id="UP000189702">
    <property type="component" value="Chloroplast Pltd"/>
</dbReference>
<dbReference type="GO" id="GO:0009535">
    <property type="term" value="C:chloroplast thylakoid membrane"/>
    <property type="evidence" value="ECO:0007669"/>
    <property type="project" value="UniProtKB-SubCell"/>
</dbReference>
<dbReference type="GO" id="GO:0009522">
    <property type="term" value="C:photosystem I"/>
    <property type="evidence" value="ECO:0007669"/>
    <property type="project" value="UniProtKB-KW"/>
</dbReference>
<dbReference type="GO" id="GO:0051539">
    <property type="term" value="F:4 iron, 4 sulfur cluster binding"/>
    <property type="evidence" value="ECO:0007669"/>
    <property type="project" value="UniProtKB-KW"/>
</dbReference>
<dbReference type="GO" id="GO:0016168">
    <property type="term" value="F:chlorophyll binding"/>
    <property type="evidence" value="ECO:0007669"/>
    <property type="project" value="UniProtKB-KW"/>
</dbReference>
<dbReference type="GO" id="GO:0009055">
    <property type="term" value="F:electron transfer activity"/>
    <property type="evidence" value="ECO:0007669"/>
    <property type="project" value="UniProtKB-UniRule"/>
</dbReference>
<dbReference type="GO" id="GO:0000287">
    <property type="term" value="F:magnesium ion binding"/>
    <property type="evidence" value="ECO:0007669"/>
    <property type="project" value="UniProtKB-UniRule"/>
</dbReference>
<dbReference type="GO" id="GO:0016491">
    <property type="term" value="F:oxidoreductase activity"/>
    <property type="evidence" value="ECO:0007669"/>
    <property type="project" value="UniProtKB-KW"/>
</dbReference>
<dbReference type="GO" id="GO:0015979">
    <property type="term" value="P:photosynthesis"/>
    <property type="evidence" value="ECO:0007669"/>
    <property type="project" value="UniProtKB-UniRule"/>
</dbReference>
<dbReference type="FunFam" id="1.20.1130.10:FF:000001">
    <property type="entry name" value="Photosystem I P700 chlorophyll a apoprotein A2"/>
    <property type="match status" value="1"/>
</dbReference>
<dbReference type="Gene3D" id="1.20.1130.10">
    <property type="entry name" value="Photosystem I PsaA/PsaB"/>
    <property type="match status" value="1"/>
</dbReference>
<dbReference type="HAMAP" id="MF_00482">
    <property type="entry name" value="PSI_PsaB"/>
    <property type="match status" value="1"/>
</dbReference>
<dbReference type="InterPro" id="IPR001280">
    <property type="entry name" value="PSI_PsaA/B"/>
</dbReference>
<dbReference type="InterPro" id="IPR020586">
    <property type="entry name" value="PSI_PsaA/B_CS"/>
</dbReference>
<dbReference type="InterPro" id="IPR036408">
    <property type="entry name" value="PSI_PsaA/B_sf"/>
</dbReference>
<dbReference type="InterPro" id="IPR006244">
    <property type="entry name" value="PSI_PsaB"/>
</dbReference>
<dbReference type="NCBIfam" id="TIGR01336">
    <property type="entry name" value="psaB"/>
    <property type="match status" value="1"/>
</dbReference>
<dbReference type="PANTHER" id="PTHR30128">
    <property type="entry name" value="OUTER MEMBRANE PROTEIN, OMPA-RELATED"/>
    <property type="match status" value="1"/>
</dbReference>
<dbReference type="PANTHER" id="PTHR30128:SF19">
    <property type="entry name" value="PHOTOSYSTEM I P700 CHLOROPHYLL A APOPROTEIN A1-RELATED"/>
    <property type="match status" value="1"/>
</dbReference>
<dbReference type="Pfam" id="PF00223">
    <property type="entry name" value="PsaA_PsaB"/>
    <property type="match status" value="1"/>
</dbReference>
<dbReference type="PIRSF" id="PIRSF002905">
    <property type="entry name" value="PSI_A"/>
    <property type="match status" value="1"/>
</dbReference>
<dbReference type="PRINTS" id="PR00257">
    <property type="entry name" value="PHOTSYSPSAAB"/>
</dbReference>
<dbReference type="SUPFAM" id="SSF81558">
    <property type="entry name" value="Photosystem I subunits PsaA/PsaB"/>
    <property type="match status" value="1"/>
</dbReference>
<dbReference type="PROSITE" id="PS00419">
    <property type="entry name" value="PHOTOSYSTEM_I_PSAAB"/>
    <property type="match status" value="1"/>
</dbReference>
<organism>
    <name type="scientific">Gossypium hirsutum</name>
    <name type="common">Upland cotton</name>
    <name type="synonym">Gossypium mexicanum</name>
    <dbReference type="NCBI Taxonomy" id="3635"/>
    <lineage>
        <taxon>Eukaryota</taxon>
        <taxon>Viridiplantae</taxon>
        <taxon>Streptophyta</taxon>
        <taxon>Embryophyta</taxon>
        <taxon>Tracheophyta</taxon>
        <taxon>Spermatophyta</taxon>
        <taxon>Magnoliopsida</taxon>
        <taxon>eudicotyledons</taxon>
        <taxon>Gunneridae</taxon>
        <taxon>Pentapetalae</taxon>
        <taxon>rosids</taxon>
        <taxon>malvids</taxon>
        <taxon>Malvales</taxon>
        <taxon>Malvaceae</taxon>
        <taxon>Malvoideae</taxon>
        <taxon>Gossypium</taxon>
    </lineage>
</organism>
<gene>
    <name evidence="1" type="primary">psaB</name>
</gene>
<evidence type="ECO:0000255" key="1">
    <source>
        <dbReference type="HAMAP-Rule" id="MF_00482"/>
    </source>
</evidence>
<geneLocation type="chloroplast"/>
<accession>Q2L903</accession>
<name>PSAB_GOSHI</name>
<sequence length="734" mass="82404">MALRFPRFSQGLAQDPTTRRIWFGIATAHDFESHDDITEERLYQNIFASHFGQLAIIFLWTSGNLFHVAWQGNFEAWVQDPLHVRPIAHAIWDPHFGQPAVEAFTRGGAPGPVNIAYSGVYQWWYTIGLRTNEDLYTGALFLLFLSALSLIAGWLHLQPKWKPSVSWFKNAESRLNHHLSGLFGVSSLAWTGHLVHVAIPGSRGEYVRWNNFLDVLPHPQGLGPFFSGQWNLYAQNPDSSSHLFGTSQGSGTAILTLLGGFHPQTQSLWLTDIAHHHLAIAILFLIAGHMYRTNFGIGHSIKDLLEAHIPPGGRLGRGHKGLYDTINNSIHFQLGLALASLGVITSLVAQHMYSLPAYAFIAQDFTTQAALYTHHQYIAGFIMTGAFAHGAIFFIRDYNPEQNEDNVLARMLDHKEAIISHLSWASLFLGFHTLGLYVHNDVMLAFGTPEKQILIEPIFAQWIQSAHGKTSYGFDVLLSSTNGPAFNAGRSIWLPGWLNAVNENSNSLFLTIGPGDFLVHHAIALGLHTTTLILVKGALDARGSKLMPDKKDFGYSFPCDGPGRGGTCDISAWDAFYLAVFWMLNTIGWVTFYWHWKHITLWQGNVSQFNESSTYLMGWLRDYLWLNSSQLINGYNPFGMNSLSVWAWMFLFGHLVWATGFMFLISWRGYWQELIETLAWAHERTPLANLIRWRDKPVALSIVQARLVGLAHFSVGYIFTYAAFLIASTSGKFG</sequence>
<protein>
    <recommendedName>
        <fullName evidence="1">Photosystem I P700 chlorophyll a apoprotein A2</fullName>
        <ecNumber evidence="1">1.97.1.12</ecNumber>
    </recommendedName>
    <alternativeName>
        <fullName evidence="1">PSI-B</fullName>
    </alternativeName>
    <alternativeName>
        <fullName evidence="1">PsaB</fullName>
    </alternativeName>
</protein>
<comment type="function">
    <text evidence="1">PsaA and PsaB bind P700, the primary electron donor of photosystem I (PSI), as well as the electron acceptors A0, A1 and FX. PSI is a plastocyanin-ferredoxin oxidoreductase, converting photonic excitation into a charge separation, which transfers an electron from the donor P700 chlorophyll pair to the spectroscopically characterized acceptors A0, A1, FX, FA and FB in turn. Oxidized P700 is reduced on the lumenal side of the thylakoid membrane by plastocyanin.</text>
</comment>
<comment type="catalytic activity">
    <reaction evidence="1">
        <text>reduced [plastocyanin] + hnu + oxidized [2Fe-2S]-[ferredoxin] = oxidized [plastocyanin] + reduced [2Fe-2S]-[ferredoxin]</text>
        <dbReference type="Rhea" id="RHEA:30407"/>
        <dbReference type="Rhea" id="RHEA-COMP:10000"/>
        <dbReference type="Rhea" id="RHEA-COMP:10001"/>
        <dbReference type="Rhea" id="RHEA-COMP:10039"/>
        <dbReference type="Rhea" id="RHEA-COMP:10040"/>
        <dbReference type="ChEBI" id="CHEBI:29036"/>
        <dbReference type="ChEBI" id="CHEBI:30212"/>
        <dbReference type="ChEBI" id="CHEBI:33737"/>
        <dbReference type="ChEBI" id="CHEBI:33738"/>
        <dbReference type="ChEBI" id="CHEBI:49552"/>
        <dbReference type="EC" id="1.97.1.12"/>
    </reaction>
</comment>
<comment type="cofactor">
    <text evidence="1">P700 is a chlorophyll a/chlorophyll a' dimer, A0 is one or more chlorophyll a, A1 is one or both phylloquinones and FX is a shared 4Fe-4S iron-sulfur center.</text>
</comment>
<comment type="subunit">
    <text evidence="1">The PsaA/B heterodimer binds the P700 chlorophyll special pair and subsequent electron acceptors. PSI consists of a core antenna complex that captures photons, and an electron transfer chain that converts photonic excitation into a charge separation. The eukaryotic PSI reaction center is composed of at least 11 subunits.</text>
</comment>
<comment type="subcellular location">
    <subcellularLocation>
        <location>Plastid</location>
        <location>Chloroplast thylakoid membrane</location>
        <topology>Multi-pass membrane protein</topology>
    </subcellularLocation>
</comment>
<comment type="similarity">
    <text evidence="1">Belongs to the PsaA/PsaB family.</text>
</comment>
<keyword id="KW-0004">4Fe-4S</keyword>
<keyword id="KW-0148">Chlorophyll</keyword>
<keyword id="KW-0150">Chloroplast</keyword>
<keyword id="KW-0157">Chromophore</keyword>
<keyword id="KW-0249">Electron transport</keyword>
<keyword id="KW-0408">Iron</keyword>
<keyword id="KW-0411">Iron-sulfur</keyword>
<keyword id="KW-0460">Magnesium</keyword>
<keyword id="KW-0472">Membrane</keyword>
<keyword id="KW-0479">Metal-binding</keyword>
<keyword id="KW-0560">Oxidoreductase</keyword>
<keyword id="KW-0602">Photosynthesis</keyword>
<keyword id="KW-0603">Photosystem I</keyword>
<keyword id="KW-0934">Plastid</keyword>
<keyword id="KW-1185">Reference proteome</keyword>
<keyword id="KW-0793">Thylakoid</keyword>
<keyword id="KW-0812">Transmembrane</keyword>
<keyword id="KW-1133">Transmembrane helix</keyword>
<keyword id="KW-0813">Transport</keyword>
<feature type="chain" id="PRO_0000277116" description="Photosystem I P700 chlorophyll a apoprotein A2">
    <location>
        <begin position="1"/>
        <end position="734"/>
    </location>
</feature>
<feature type="transmembrane region" description="Helical; Name=I" evidence="1">
    <location>
        <begin position="46"/>
        <end position="69"/>
    </location>
</feature>
<feature type="transmembrane region" description="Helical; Name=II" evidence="1">
    <location>
        <begin position="135"/>
        <end position="158"/>
    </location>
</feature>
<feature type="transmembrane region" description="Helical; Name=III" evidence="1">
    <location>
        <begin position="175"/>
        <end position="199"/>
    </location>
</feature>
<feature type="transmembrane region" description="Helical; Name=IV" evidence="1">
    <location>
        <begin position="273"/>
        <end position="291"/>
    </location>
</feature>
<feature type="transmembrane region" description="Helical; Name=V" evidence="1">
    <location>
        <begin position="330"/>
        <end position="353"/>
    </location>
</feature>
<feature type="transmembrane region" description="Helical; Name=VI" evidence="1">
    <location>
        <begin position="369"/>
        <end position="395"/>
    </location>
</feature>
<feature type="transmembrane region" description="Helical; Name=VII" evidence="1">
    <location>
        <begin position="417"/>
        <end position="439"/>
    </location>
</feature>
<feature type="transmembrane region" description="Helical; Name=VIII" evidence="1">
    <location>
        <begin position="517"/>
        <end position="535"/>
    </location>
</feature>
<feature type="transmembrane region" description="Helical; Name=IX" evidence="1">
    <location>
        <begin position="575"/>
        <end position="596"/>
    </location>
</feature>
<feature type="transmembrane region" description="Helical; Name=X" evidence="1">
    <location>
        <begin position="643"/>
        <end position="665"/>
    </location>
</feature>
<feature type="transmembrane region" description="Helical; Name=XI" evidence="1">
    <location>
        <begin position="707"/>
        <end position="727"/>
    </location>
</feature>
<feature type="binding site" evidence="1">
    <location>
        <position position="559"/>
    </location>
    <ligand>
        <name>[4Fe-4S] cluster</name>
        <dbReference type="ChEBI" id="CHEBI:49883"/>
        <note>ligand shared between dimeric partners</note>
    </ligand>
</feature>
<feature type="binding site" evidence="1">
    <location>
        <position position="568"/>
    </location>
    <ligand>
        <name>[4Fe-4S] cluster</name>
        <dbReference type="ChEBI" id="CHEBI:49883"/>
        <note>ligand shared between dimeric partners</note>
    </ligand>
</feature>
<feature type="binding site" description="axial binding residue" evidence="1">
    <location>
        <position position="654"/>
    </location>
    <ligand>
        <name>chlorophyll a</name>
        <dbReference type="ChEBI" id="CHEBI:58416"/>
        <label>B1</label>
    </ligand>
    <ligandPart>
        <name>Mg</name>
        <dbReference type="ChEBI" id="CHEBI:25107"/>
    </ligandPart>
</feature>
<feature type="binding site" description="axial binding residue" evidence="1">
    <location>
        <position position="662"/>
    </location>
    <ligand>
        <name>chlorophyll a</name>
        <dbReference type="ChEBI" id="CHEBI:58416"/>
        <label>B3</label>
    </ligand>
    <ligandPart>
        <name>Mg</name>
        <dbReference type="ChEBI" id="CHEBI:25107"/>
    </ligandPart>
</feature>
<feature type="binding site" evidence="1">
    <location>
        <position position="670"/>
    </location>
    <ligand>
        <name>chlorophyll a</name>
        <dbReference type="ChEBI" id="CHEBI:58416"/>
        <label>B3</label>
    </ligand>
</feature>
<feature type="binding site" evidence="1">
    <location>
        <position position="671"/>
    </location>
    <ligand>
        <name>phylloquinone</name>
        <dbReference type="ChEBI" id="CHEBI:18067"/>
        <label>B</label>
    </ligand>
</feature>
<reference key="1">
    <citation type="journal article" date="2006" name="BMC Genomics">
        <title>The complete chloroplast genome sequence of Gossypium hirsutum: organization and phylogenetic relationships to other angiosperms.</title>
        <authorList>
            <person name="Lee S.-B."/>
            <person name="Kaittanis C."/>
            <person name="Jansen R.K."/>
            <person name="Hostetler J.B."/>
            <person name="Tallon L.J."/>
            <person name="Town C.D."/>
            <person name="Daniell H."/>
        </authorList>
    </citation>
    <scope>NUCLEOTIDE SEQUENCE [LARGE SCALE GENOMIC DNA]</scope>
    <source>
        <strain>cv. Coker 310FR</strain>
    </source>
</reference>